<protein>
    <recommendedName>
        <fullName>Tubulin-specific chaperone A</fullName>
    </recommendedName>
    <alternativeName>
        <fullName>Altered polarity protein 31</fullName>
    </alternativeName>
    <alternativeName>
        <fullName>Tubulin-folding cofactor A</fullName>
        <shortName>CFA</shortName>
    </alternativeName>
</protein>
<accession>Q9Y703</accession>
<dbReference type="EMBL" id="AB029481">
    <property type="protein sequence ID" value="BAA82293.1"/>
    <property type="molecule type" value="Genomic_DNA"/>
</dbReference>
<dbReference type="EMBL" id="CU329670">
    <property type="protein sequence ID" value="CAB40194.1"/>
    <property type="molecule type" value="Genomic_DNA"/>
</dbReference>
<dbReference type="PIR" id="T43514">
    <property type="entry name" value="T43514"/>
</dbReference>
<dbReference type="RefSeq" id="NP_594162.1">
    <property type="nucleotide sequence ID" value="NM_001019586.2"/>
</dbReference>
<dbReference type="SMR" id="Q9Y703"/>
<dbReference type="BioGRID" id="279764">
    <property type="interactions" value="78"/>
</dbReference>
<dbReference type="FunCoup" id="Q9Y703">
    <property type="interactions" value="130"/>
</dbReference>
<dbReference type="STRING" id="284812.Q9Y703"/>
<dbReference type="iPTMnet" id="Q9Y703"/>
<dbReference type="PaxDb" id="4896-SPAC8E11.07c.1"/>
<dbReference type="EnsemblFungi" id="SPAC8E11.07c.1">
    <property type="protein sequence ID" value="SPAC8E11.07c.1:pep"/>
    <property type="gene ID" value="SPAC8E11.07c"/>
</dbReference>
<dbReference type="GeneID" id="2543341"/>
<dbReference type="KEGG" id="spo:2543341"/>
<dbReference type="PomBase" id="SPAC8E11.07c">
    <property type="gene designation" value="alp31"/>
</dbReference>
<dbReference type="VEuPathDB" id="FungiDB:SPAC8E11.07c"/>
<dbReference type="eggNOG" id="KOG3470">
    <property type="taxonomic scope" value="Eukaryota"/>
</dbReference>
<dbReference type="HOGENOM" id="CLU_2051002_0_0_1"/>
<dbReference type="InParanoid" id="Q9Y703"/>
<dbReference type="OMA" id="HEIEHQK"/>
<dbReference type="PhylomeDB" id="Q9Y703"/>
<dbReference type="PRO" id="PR:Q9Y703"/>
<dbReference type="Proteomes" id="UP000002485">
    <property type="component" value="Chromosome I"/>
</dbReference>
<dbReference type="GO" id="GO:0005829">
    <property type="term" value="C:cytosol"/>
    <property type="evidence" value="ECO:0007005"/>
    <property type="project" value="PomBase"/>
</dbReference>
<dbReference type="GO" id="GO:0005874">
    <property type="term" value="C:microtubule"/>
    <property type="evidence" value="ECO:0007669"/>
    <property type="project" value="UniProtKB-KW"/>
</dbReference>
<dbReference type="GO" id="GO:0015630">
    <property type="term" value="C:microtubule cytoskeleton"/>
    <property type="evidence" value="ECO:0000318"/>
    <property type="project" value="GO_Central"/>
</dbReference>
<dbReference type="GO" id="GO:0005634">
    <property type="term" value="C:nucleus"/>
    <property type="evidence" value="ECO:0007005"/>
    <property type="project" value="PomBase"/>
</dbReference>
<dbReference type="GO" id="GO:0048487">
    <property type="term" value="F:beta-tubulin binding"/>
    <property type="evidence" value="ECO:0007669"/>
    <property type="project" value="InterPro"/>
</dbReference>
<dbReference type="GO" id="GO:0044183">
    <property type="term" value="F:protein folding chaperone"/>
    <property type="evidence" value="ECO:0000316"/>
    <property type="project" value="PomBase"/>
</dbReference>
<dbReference type="GO" id="GO:0015631">
    <property type="term" value="F:tubulin binding"/>
    <property type="evidence" value="ECO:0000318"/>
    <property type="project" value="GO_Central"/>
</dbReference>
<dbReference type="GO" id="GO:0007023">
    <property type="term" value="P:post-chaperonin tubulin folding pathway"/>
    <property type="evidence" value="ECO:0000316"/>
    <property type="project" value="PomBase"/>
</dbReference>
<dbReference type="GO" id="GO:0006457">
    <property type="term" value="P:protein folding"/>
    <property type="evidence" value="ECO:0000318"/>
    <property type="project" value="GO_Central"/>
</dbReference>
<dbReference type="GO" id="GO:0007021">
    <property type="term" value="P:tubulin complex assembly"/>
    <property type="evidence" value="ECO:0000318"/>
    <property type="project" value="GO_Central"/>
</dbReference>
<dbReference type="Gene3D" id="1.20.58.90">
    <property type="match status" value="1"/>
</dbReference>
<dbReference type="InterPro" id="IPR004226">
    <property type="entry name" value="TBCA"/>
</dbReference>
<dbReference type="InterPro" id="IPR036126">
    <property type="entry name" value="TBCA_sf"/>
</dbReference>
<dbReference type="PANTHER" id="PTHR21500">
    <property type="entry name" value="TUBULIN-SPECIFIC CHAPERONE A"/>
    <property type="match status" value="1"/>
</dbReference>
<dbReference type="PANTHER" id="PTHR21500:SF0">
    <property type="entry name" value="TUBULIN-SPECIFIC CHAPERONE A"/>
    <property type="match status" value="1"/>
</dbReference>
<dbReference type="Pfam" id="PF02970">
    <property type="entry name" value="TBCA"/>
    <property type="match status" value="1"/>
</dbReference>
<dbReference type="SUPFAM" id="SSF46988">
    <property type="entry name" value="Tubulin chaperone cofactor A"/>
    <property type="match status" value="1"/>
</dbReference>
<organism>
    <name type="scientific">Schizosaccharomyces pombe (strain 972 / ATCC 24843)</name>
    <name type="common">Fission yeast</name>
    <dbReference type="NCBI Taxonomy" id="284812"/>
    <lineage>
        <taxon>Eukaryota</taxon>
        <taxon>Fungi</taxon>
        <taxon>Dikarya</taxon>
        <taxon>Ascomycota</taxon>
        <taxon>Taphrinomycotina</taxon>
        <taxon>Schizosaccharomycetes</taxon>
        <taxon>Schizosaccharomycetales</taxon>
        <taxon>Schizosaccharomycetaceae</taxon>
        <taxon>Schizosaccharomyces</taxon>
    </lineage>
</organism>
<evidence type="ECO:0000250" key="1"/>
<evidence type="ECO:0000269" key="2">
    <source>
    </source>
</evidence>
<evidence type="ECO:0000305" key="3"/>
<keyword id="KW-0143">Chaperone</keyword>
<keyword id="KW-0963">Cytoplasm</keyword>
<keyword id="KW-0206">Cytoskeleton</keyword>
<keyword id="KW-0493">Microtubule</keyword>
<keyword id="KW-1185">Reference proteome</keyword>
<name>TBCA_SCHPO</name>
<comment type="function">
    <text evidence="2">Required for the maintenance of microtubule structures and cell polarity. Beta-tubulin-folding protein; may have a regulatory role in the tubulin-folding pathway.</text>
</comment>
<comment type="subunit">
    <text evidence="1">Supercomplex made of cofactors A to E. Cofactors A and D function by capturing and stabilizing tubulin in a quasi-native conformation. Cofactor E binds to the cofactor D-tubulin complex; interaction with cofactor C then causes the release of tubulin polypeptides that are committed to the native state (By similarity).</text>
</comment>
<comment type="subcellular location">
    <subcellularLocation>
        <location>Cytoplasm</location>
        <location>Cytoskeleton</location>
    </subcellularLocation>
</comment>
<comment type="similarity">
    <text evidence="3">Belongs to the TBCA family.</text>
</comment>
<feature type="chain" id="PRO_0000080044" description="Tubulin-specific chaperone A">
    <location>
        <begin position="1"/>
        <end position="119"/>
    </location>
</feature>
<gene>
    <name type="primary">alp31</name>
    <name type="ORF">SPAC8E11.07c</name>
</gene>
<proteinExistence type="inferred from homology"/>
<sequence length="119" mass="13531">MSNTVRSLVIKTNVVKRIIKDVELAHIDINEAEKRVQSKIDNGEDSAEIEHQKFVLKKHLEALPDALVRLRNATNDLESISSDSAYEGTPELEQANEYLEKAKEVIEKEQTNFPTNGYH</sequence>
<reference key="1">
    <citation type="journal article" date="2000" name="Genetics">
        <title>The cofactor-dependent pathways for alpha- and beta-tubulins in microtubule biogenesis are functionally different in fission yeast.</title>
        <authorList>
            <person name="Radcliffe P.A."/>
            <person name="Garcia M.A."/>
            <person name="Toda T."/>
        </authorList>
    </citation>
    <scope>NUCLEOTIDE SEQUENCE [GENOMIC DNA]</scope>
    <scope>FUNCTION</scope>
    <source>
        <strain>972 / ATCC 24843</strain>
    </source>
</reference>
<reference key="2">
    <citation type="journal article" date="2002" name="Nature">
        <title>The genome sequence of Schizosaccharomyces pombe.</title>
        <authorList>
            <person name="Wood V."/>
            <person name="Gwilliam R."/>
            <person name="Rajandream M.A."/>
            <person name="Lyne M.H."/>
            <person name="Lyne R."/>
            <person name="Stewart A."/>
            <person name="Sgouros J.G."/>
            <person name="Peat N."/>
            <person name="Hayles J."/>
            <person name="Baker S.G."/>
            <person name="Basham D."/>
            <person name="Bowman S."/>
            <person name="Brooks K."/>
            <person name="Brown D."/>
            <person name="Brown S."/>
            <person name="Chillingworth T."/>
            <person name="Churcher C.M."/>
            <person name="Collins M."/>
            <person name="Connor R."/>
            <person name="Cronin A."/>
            <person name="Davis P."/>
            <person name="Feltwell T."/>
            <person name="Fraser A."/>
            <person name="Gentles S."/>
            <person name="Goble A."/>
            <person name="Hamlin N."/>
            <person name="Harris D.E."/>
            <person name="Hidalgo J."/>
            <person name="Hodgson G."/>
            <person name="Holroyd S."/>
            <person name="Hornsby T."/>
            <person name="Howarth S."/>
            <person name="Huckle E.J."/>
            <person name="Hunt S."/>
            <person name="Jagels K."/>
            <person name="James K.D."/>
            <person name="Jones L."/>
            <person name="Jones M."/>
            <person name="Leather S."/>
            <person name="McDonald S."/>
            <person name="McLean J."/>
            <person name="Mooney P."/>
            <person name="Moule S."/>
            <person name="Mungall K.L."/>
            <person name="Murphy L.D."/>
            <person name="Niblett D."/>
            <person name="Odell C."/>
            <person name="Oliver K."/>
            <person name="O'Neil S."/>
            <person name="Pearson D."/>
            <person name="Quail M.A."/>
            <person name="Rabbinowitsch E."/>
            <person name="Rutherford K.M."/>
            <person name="Rutter S."/>
            <person name="Saunders D."/>
            <person name="Seeger K."/>
            <person name="Sharp S."/>
            <person name="Skelton J."/>
            <person name="Simmonds M.N."/>
            <person name="Squares R."/>
            <person name="Squares S."/>
            <person name="Stevens K."/>
            <person name="Taylor K."/>
            <person name="Taylor R.G."/>
            <person name="Tivey A."/>
            <person name="Walsh S.V."/>
            <person name="Warren T."/>
            <person name="Whitehead S."/>
            <person name="Woodward J.R."/>
            <person name="Volckaert G."/>
            <person name="Aert R."/>
            <person name="Robben J."/>
            <person name="Grymonprez B."/>
            <person name="Weltjens I."/>
            <person name="Vanstreels E."/>
            <person name="Rieger M."/>
            <person name="Schaefer M."/>
            <person name="Mueller-Auer S."/>
            <person name="Gabel C."/>
            <person name="Fuchs M."/>
            <person name="Duesterhoeft A."/>
            <person name="Fritzc C."/>
            <person name="Holzer E."/>
            <person name="Moestl D."/>
            <person name="Hilbert H."/>
            <person name="Borzym K."/>
            <person name="Langer I."/>
            <person name="Beck A."/>
            <person name="Lehrach H."/>
            <person name="Reinhardt R."/>
            <person name="Pohl T.M."/>
            <person name="Eger P."/>
            <person name="Zimmermann W."/>
            <person name="Wedler H."/>
            <person name="Wambutt R."/>
            <person name="Purnelle B."/>
            <person name="Goffeau A."/>
            <person name="Cadieu E."/>
            <person name="Dreano S."/>
            <person name="Gloux S."/>
            <person name="Lelaure V."/>
            <person name="Mottier S."/>
            <person name="Galibert F."/>
            <person name="Aves S.J."/>
            <person name="Xiang Z."/>
            <person name="Hunt C."/>
            <person name="Moore K."/>
            <person name="Hurst S.M."/>
            <person name="Lucas M."/>
            <person name="Rochet M."/>
            <person name="Gaillardin C."/>
            <person name="Tallada V.A."/>
            <person name="Garzon A."/>
            <person name="Thode G."/>
            <person name="Daga R.R."/>
            <person name="Cruzado L."/>
            <person name="Jimenez J."/>
            <person name="Sanchez M."/>
            <person name="del Rey F."/>
            <person name="Benito J."/>
            <person name="Dominguez A."/>
            <person name="Revuelta J.L."/>
            <person name="Moreno S."/>
            <person name="Armstrong J."/>
            <person name="Forsburg S.L."/>
            <person name="Cerutti L."/>
            <person name="Lowe T."/>
            <person name="McCombie W.R."/>
            <person name="Paulsen I."/>
            <person name="Potashkin J."/>
            <person name="Shpakovski G.V."/>
            <person name="Ussery D."/>
            <person name="Barrell B.G."/>
            <person name="Nurse P."/>
        </authorList>
    </citation>
    <scope>NUCLEOTIDE SEQUENCE [LARGE SCALE GENOMIC DNA]</scope>
    <source>
        <strain>972 / ATCC 24843</strain>
    </source>
</reference>